<evidence type="ECO:0000255" key="1">
    <source>
        <dbReference type="HAMAP-Rule" id="MF_01006"/>
    </source>
</evidence>
<name>UPPP_ANOFW</name>
<feature type="chain" id="PRO_1000197347" description="Undecaprenyl-diphosphatase">
    <location>
        <begin position="1"/>
        <end position="273"/>
    </location>
</feature>
<feature type="transmembrane region" description="Helical" evidence="1">
    <location>
        <begin position="3"/>
        <end position="23"/>
    </location>
</feature>
<feature type="transmembrane region" description="Helical" evidence="1">
    <location>
        <begin position="48"/>
        <end position="68"/>
    </location>
</feature>
<feature type="transmembrane region" description="Helical" evidence="1">
    <location>
        <begin position="89"/>
        <end position="109"/>
    </location>
</feature>
<feature type="transmembrane region" description="Helical" evidence="1">
    <location>
        <begin position="116"/>
        <end position="136"/>
    </location>
</feature>
<feature type="transmembrane region" description="Helical" evidence="1">
    <location>
        <begin position="151"/>
        <end position="171"/>
    </location>
</feature>
<feature type="transmembrane region" description="Helical" evidence="1">
    <location>
        <begin position="192"/>
        <end position="212"/>
    </location>
</feature>
<feature type="transmembrane region" description="Helical" evidence="1">
    <location>
        <begin position="225"/>
        <end position="245"/>
    </location>
</feature>
<feature type="transmembrane region" description="Helical" evidence="1">
    <location>
        <begin position="253"/>
        <end position="273"/>
    </location>
</feature>
<organism>
    <name type="scientific">Anoxybacillus flavithermus (strain DSM 21510 / WK1)</name>
    <dbReference type="NCBI Taxonomy" id="491915"/>
    <lineage>
        <taxon>Bacteria</taxon>
        <taxon>Bacillati</taxon>
        <taxon>Bacillota</taxon>
        <taxon>Bacilli</taxon>
        <taxon>Bacillales</taxon>
        <taxon>Anoxybacillaceae</taxon>
        <taxon>Anoxybacillus</taxon>
    </lineage>
</organism>
<proteinExistence type="inferred from homology"/>
<dbReference type="EC" id="3.6.1.27" evidence="1"/>
<dbReference type="EMBL" id="CP000922">
    <property type="protein sequence ID" value="ACJ33576.1"/>
    <property type="molecule type" value="Genomic_DNA"/>
</dbReference>
<dbReference type="RefSeq" id="WP_012574827.1">
    <property type="nucleotide sequence ID" value="NC_011567.1"/>
</dbReference>
<dbReference type="SMR" id="B7GJC8"/>
<dbReference type="STRING" id="491915.Aflv_1202"/>
<dbReference type="GeneID" id="7037458"/>
<dbReference type="KEGG" id="afl:Aflv_1202"/>
<dbReference type="PATRIC" id="fig|491915.6.peg.1228"/>
<dbReference type="eggNOG" id="COG1968">
    <property type="taxonomic scope" value="Bacteria"/>
</dbReference>
<dbReference type="HOGENOM" id="CLU_060296_2_0_9"/>
<dbReference type="Proteomes" id="UP000000742">
    <property type="component" value="Chromosome"/>
</dbReference>
<dbReference type="GO" id="GO:0005886">
    <property type="term" value="C:plasma membrane"/>
    <property type="evidence" value="ECO:0007669"/>
    <property type="project" value="UniProtKB-SubCell"/>
</dbReference>
<dbReference type="GO" id="GO:0050380">
    <property type="term" value="F:undecaprenyl-diphosphatase activity"/>
    <property type="evidence" value="ECO:0007669"/>
    <property type="project" value="UniProtKB-UniRule"/>
</dbReference>
<dbReference type="GO" id="GO:0071555">
    <property type="term" value="P:cell wall organization"/>
    <property type="evidence" value="ECO:0007669"/>
    <property type="project" value="UniProtKB-KW"/>
</dbReference>
<dbReference type="GO" id="GO:0009252">
    <property type="term" value="P:peptidoglycan biosynthetic process"/>
    <property type="evidence" value="ECO:0007669"/>
    <property type="project" value="UniProtKB-KW"/>
</dbReference>
<dbReference type="GO" id="GO:0008360">
    <property type="term" value="P:regulation of cell shape"/>
    <property type="evidence" value="ECO:0007669"/>
    <property type="project" value="UniProtKB-KW"/>
</dbReference>
<dbReference type="GO" id="GO:0046677">
    <property type="term" value="P:response to antibiotic"/>
    <property type="evidence" value="ECO:0007669"/>
    <property type="project" value="UniProtKB-UniRule"/>
</dbReference>
<dbReference type="HAMAP" id="MF_01006">
    <property type="entry name" value="Undec_diphosphatase"/>
    <property type="match status" value="1"/>
</dbReference>
<dbReference type="InterPro" id="IPR003824">
    <property type="entry name" value="UppP"/>
</dbReference>
<dbReference type="NCBIfam" id="NF001390">
    <property type="entry name" value="PRK00281.1-4"/>
    <property type="match status" value="1"/>
</dbReference>
<dbReference type="NCBIfam" id="TIGR00753">
    <property type="entry name" value="undec_PP_bacA"/>
    <property type="match status" value="1"/>
</dbReference>
<dbReference type="PANTHER" id="PTHR30622">
    <property type="entry name" value="UNDECAPRENYL-DIPHOSPHATASE"/>
    <property type="match status" value="1"/>
</dbReference>
<dbReference type="PANTHER" id="PTHR30622:SF3">
    <property type="entry name" value="UNDECAPRENYL-DIPHOSPHATASE"/>
    <property type="match status" value="1"/>
</dbReference>
<dbReference type="Pfam" id="PF02673">
    <property type="entry name" value="BacA"/>
    <property type="match status" value="1"/>
</dbReference>
<protein>
    <recommendedName>
        <fullName evidence="1">Undecaprenyl-diphosphatase</fullName>
        <ecNumber evidence="1">3.6.1.27</ecNumber>
    </recommendedName>
    <alternativeName>
        <fullName evidence="1">Bacitracin resistance protein</fullName>
    </alternativeName>
    <alternativeName>
        <fullName evidence="1">Undecaprenyl pyrophosphate phosphatase</fullName>
    </alternativeName>
</protein>
<reference key="1">
    <citation type="journal article" date="2008" name="Genome Biol.">
        <title>Encapsulated in silica: genome, proteome and physiology of the thermophilic bacterium Anoxybacillus flavithermus WK1.</title>
        <authorList>
            <person name="Saw J.H."/>
            <person name="Mountain B.W."/>
            <person name="Feng L."/>
            <person name="Omelchenko M.V."/>
            <person name="Hou S."/>
            <person name="Saito J.A."/>
            <person name="Stott M.B."/>
            <person name="Li D."/>
            <person name="Zhao G."/>
            <person name="Wu J."/>
            <person name="Galperin M.Y."/>
            <person name="Koonin E.V."/>
            <person name="Makarova K.S."/>
            <person name="Wolf Y.I."/>
            <person name="Rigden D.J."/>
            <person name="Dunfield P.F."/>
            <person name="Wang L."/>
            <person name="Alam M."/>
        </authorList>
    </citation>
    <scope>NUCLEOTIDE SEQUENCE [LARGE SCALE GENOMIC DNA]</scope>
    <source>
        <strain>DSM 21510 / WK1</strain>
    </source>
</reference>
<sequence length="273" mass="30068">MHIIELIKALILGLVEGATEFAPVSSTGHMIIVDDMWLKSSEFLGKYGANTFKVVIQLGSVLAAVVVFKDKFFELLYLRKGEVRKGPRLTLMHIFVGLLPAGVLGVLFEDYIDEHLFSTKTVLIGLVLGALLMIAADRFGKRTVAQTVDDITYKQAFIVGLVQCLSLWPGFSRSGSTISGGVLVGMSHRAAADFTFIMAVPIMAGASAISLLKNWQYITFDALPFFVVGFISAFVFALLAIRFFLRLINRVRLVPFAIYRIVLAAVIYVVYFA</sequence>
<gene>
    <name evidence="1" type="primary">uppP</name>
    <name type="ordered locus">Aflv_1202</name>
</gene>
<comment type="function">
    <text evidence="1">Catalyzes the dephosphorylation of undecaprenyl diphosphate (UPP). Confers resistance to bacitracin.</text>
</comment>
<comment type="catalytic activity">
    <reaction evidence="1">
        <text>di-trans,octa-cis-undecaprenyl diphosphate + H2O = di-trans,octa-cis-undecaprenyl phosphate + phosphate + H(+)</text>
        <dbReference type="Rhea" id="RHEA:28094"/>
        <dbReference type="ChEBI" id="CHEBI:15377"/>
        <dbReference type="ChEBI" id="CHEBI:15378"/>
        <dbReference type="ChEBI" id="CHEBI:43474"/>
        <dbReference type="ChEBI" id="CHEBI:58405"/>
        <dbReference type="ChEBI" id="CHEBI:60392"/>
        <dbReference type="EC" id="3.6.1.27"/>
    </reaction>
</comment>
<comment type="subcellular location">
    <subcellularLocation>
        <location evidence="1">Cell membrane</location>
        <topology evidence="1">Multi-pass membrane protein</topology>
    </subcellularLocation>
</comment>
<comment type="miscellaneous">
    <text>Bacitracin is thought to be involved in the inhibition of peptidoglycan synthesis by sequestering undecaprenyl diphosphate, thereby reducing the pool of lipid carrier available.</text>
</comment>
<comment type="similarity">
    <text evidence="1">Belongs to the UppP family.</text>
</comment>
<accession>B7GJC8</accession>
<keyword id="KW-0046">Antibiotic resistance</keyword>
<keyword id="KW-1003">Cell membrane</keyword>
<keyword id="KW-0133">Cell shape</keyword>
<keyword id="KW-0961">Cell wall biogenesis/degradation</keyword>
<keyword id="KW-0378">Hydrolase</keyword>
<keyword id="KW-0472">Membrane</keyword>
<keyword id="KW-0573">Peptidoglycan synthesis</keyword>
<keyword id="KW-0812">Transmembrane</keyword>
<keyword id="KW-1133">Transmembrane helix</keyword>